<comment type="similarity">
    <text evidence="1">Belongs to the universal ribosomal protein uL29 family.</text>
</comment>
<accession>Q6KI47</accession>
<proteinExistence type="inferred from homology"/>
<protein>
    <recommendedName>
        <fullName evidence="1">Large ribosomal subunit protein uL29</fullName>
    </recommendedName>
    <alternativeName>
        <fullName evidence="2">50S ribosomal protein L29</fullName>
    </alternativeName>
</protein>
<sequence>MLYKDIKNKSTTELNDLIVELKAELFLLRFKNKTSQQEQTHKIQVVRKDVAKVLTALKEKQILGEKELINKIDKKEVKKNARKN</sequence>
<reference key="1">
    <citation type="journal article" date="2004" name="Genome Res.">
        <title>The complete genome and proteome of Mycoplasma mobile.</title>
        <authorList>
            <person name="Jaffe J.D."/>
            <person name="Stange-Thomann N."/>
            <person name="Smith C."/>
            <person name="DeCaprio D."/>
            <person name="Fisher S."/>
            <person name="Butler J."/>
            <person name="Calvo S."/>
            <person name="Elkins T."/>
            <person name="FitzGerald M.G."/>
            <person name="Hafez N."/>
            <person name="Kodira C.D."/>
            <person name="Major J."/>
            <person name="Wang S."/>
            <person name="Wilkinson J."/>
            <person name="Nicol R."/>
            <person name="Nusbaum C."/>
            <person name="Birren B."/>
            <person name="Berg H.C."/>
            <person name="Church G.M."/>
        </authorList>
    </citation>
    <scope>NUCLEOTIDE SEQUENCE [LARGE SCALE GENOMIC DNA]</scope>
    <source>
        <strain>ATCC 43663 / NCTC 11711 / 163 K</strain>
    </source>
</reference>
<name>RL29_MYCM1</name>
<organism>
    <name type="scientific">Mycoplasma mobile (strain ATCC 43663 / 163K / NCTC 11711)</name>
    <name type="common">Mesomycoplasma mobile</name>
    <dbReference type="NCBI Taxonomy" id="267748"/>
    <lineage>
        <taxon>Bacteria</taxon>
        <taxon>Bacillati</taxon>
        <taxon>Mycoplasmatota</taxon>
        <taxon>Mycoplasmoidales</taxon>
        <taxon>Metamycoplasmataceae</taxon>
        <taxon>Mesomycoplasma</taxon>
    </lineage>
</organism>
<feature type="chain" id="PRO_1000007528" description="Large ribosomal subunit protein uL29">
    <location>
        <begin position="1"/>
        <end position="84"/>
    </location>
</feature>
<gene>
    <name evidence="1" type="primary">rpmC</name>
    <name type="ordered locus">MMOB2430</name>
</gene>
<keyword id="KW-1185">Reference proteome</keyword>
<keyword id="KW-0687">Ribonucleoprotein</keyword>
<keyword id="KW-0689">Ribosomal protein</keyword>
<evidence type="ECO:0000255" key="1">
    <source>
        <dbReference type="HAMAP-Rule" id="MF_00374"/>
    </source>
</evidence>
<evidence type="ECO:0000305" key="2"/>
<dbReference type="EMBL" id="AE017308">
    <property type="protein sequence ID" value="AAT27729.1"/>
    <property type="molecule type" value="Genomic_DNA"/>
</dbReference>
<dbReference type="RefSeq" id="WP_011264763.1">
    <property type="nucleotide sequence ID" value="NC_006908.1"/>
</dbReference>
<dbReference type="SMR" id="Q6KI47"/>
<dbReference type="STRING" id="267748.MMOB2430"/>
<dbReference type="KEGG" id="mmo:MMOB2430"/>
<dbReference type="eggNOG" id="COG0255">
    <property type="taxonomic scope" value="Bacteria"/>
</dbReference>
<dbReference type="HOGENOM" id="CLU_158491_7_0_14"/>
<dbReference type="OrthoDB" id="9815192at2"/>
<dbReference type="Proteomes" id="UP000009072">
    <property type="component" value="Chromosome"/>
</dbReference>
<dbReference type="GO" id="GO:0022625">
    <property type="term" value="C:cytosolic large ribosomal subunit"/>
    <property type="evidence" value="ECO:0007669"/>
    <property type="project" value="TreeGrafter"/>
</dbReference>
<dbReference type="GO" id="GO:0003735">
    <property type="term" value="F:structural constituent of ribosome"/>
    <property type="evidence" value="ECO:0007669"/>
    <property type="project" value="InterPro"/>
</dbReference>
<dbReference type="GO" id="GO:0006412">
    <property type="term" value="P:translation"/>
    <property type="evidence" value="ECO:0007669"/>
    <property type="project" value="UniProtKB-UniRule"/>
</dbReference>
<dbReference type="CDD" id="cd00427">
    <property type="entry name" value="Ribosomal_L29_HIP"/>
    <property type="match status" value="1"/>
</dbReference>
<dbReference type="Gene3D" id="1.10.287.310">
    <property type="match status" value="1"/>
</dbReference>
<dbReference type="HAMAP" id="MF_00374">
    <property type="entry name" value="Ribosomal_uL29"/>
    <property type="match status" value="1"/>
</dbReference>
<dbReference type="InterPro" id="IPR050063">
    <property type="entry name" value="Ribosomal_protein_uL29"/>
</dbReference>
<dbReference type="InterPro" id="IPR001854">
    <property type="entry name" value="Ribosomal_uL29"/>
</dbReference>
<dbReference type="InterPro" id="IPR036049">
    <property type="entry name" value="Ribosomal_uL29_sf"/>
</dbReference>
<dbReference type="NCBIfam" id="TIGR00012">
    <property type="entry name" value="L29"/>
    <property type="match status" value="1"/>
</dbReference>
<dbReference type="PANTHER" id="PTHR10916">
    <property type="entry name" value="60S RIBOSOMAL PROTEIN L35/50S RIBOSOMAL PROTEIN L29"/>
    <property type="match status" value="1"/>
</dbReference>
<dbReference type="PANTHER" id="PTHR10916:SF0">
    <property type="entry name" value="LARGE RIBOSOMAL SUBUNIT PROTEIN UL29C"/>
    <property type="match status" value="1"/>
</dbReference>
<dbReference type="Pfam" id="PF00831">
    <property type="entry name" value="Ribosomal_L29"/>
    <property type="match status" value="1"/>
</dbReference>
<dbReference type="SUPFAM" id="SSF46561">
    <property type="entry name" value="Ribosomal protein L29 (L29p)"/>
    <property type="match status" value="1"/>
</dbReference>